<name>Y90_SIRV1</name>
<accession>Q8QHP8</accession>
<accession>Q5TJB6</accession>
<keyword id="KW-1185">Reference proteome</keyword>
<reference key="1">
    <citation type="journal article" date="2001" name="Virology">
        <title>Sequences and replication of genomes of the archaeal rudiviruses SIRV1 and SIRV2: relationships to the archaeal lipothrixvirus SIFV and some eukaryal viruses.</title>
        <authorList>
            <person name="Peng X."/>
            <person name="Blum H."/>
            <person name="She Q."/>
            <person name="Mallok S."/>
            <person name="Bruegger K."/>
            <person name="Garrett R.A."/>
            <person name="Zillig W."/>
            <person name="Prangishvili D."/>
        </authorList>
    </citation>
    <scope>NUCLEOTIDE SEQUENCE [LARGE SCALE GENOMIC DNA]</scope>
    <source>
        <strain>Isolate variant VIII</strain>
    </source>
</reference>
<reference key="2">
    <citation type="journal article" date="2004" name="Mol. Microbiol.">
        <title>Multiple variants of the archaeal DNA rudivirus SIRV1 in a single host and a novel mechanism of genomic variation.</title>
        <authorList>
            <person name="Peng X."/>
            <person name="Kessler A."/>
            <person name="Phan H."/>
            <person name="Garrett R.A."/>
            <person name="Prangishvili D."/>
        </authorList>
    </citation>
    <scope>NUCLEOTIDE SEQUENCE [LARGE SCALE GENOMIC DNA]</scope>
    <source>
        <strain>Isolate variant XX</strain>
    </source>
</reference>
<sequence length="90" mass="10861">MQVEEMQEKVINLAQKYTNQKRFFRLIRKSNIAEKIIKEISEFYGIREDNIELFDNEIEFMFKKESVKLILKKQGNKLKIENIEMTKSIS</sequence>
<protein>
    <recommendedName>
        <fullName>Uncharacterized protein 90</fullName>
    </recommendedName>
</protein>
<organismHost>
    <name type="scientific">Saccharolobus islandicus</name>
    <name type="common">Sulfolobus islandicus</name>
    <dbReference type="NCBI Taxonomy" id="43080"/>
</organismHost>
<dbReference type="EMBL" id="AJ414696">
    <property type="protein sequence ID" value="CAC93957.1"/>
    <property type="molecule type" value="Genomic_DNA"/>
</dbReference>
<dbReference type="EMBL" id="AJ414696">
    <property type="protein sequence ID" value="CAC93999.1"/>
    <property type="molecule type" value="Genomic_DNA"/>
</dbReference>
<dbReference type="EMBL" id="AJ748296">
    <property type="protein sequence ID" value="CAG38822.1"/>
    <property type="molecule type" value="Genomic_DNA"/>
</dbReference>
<dbReference type="RefSeq" id="NP_666590.1">
    <property type="nucleotide sequence ID" value="NC_004087.1"/>
</dbReference>
<dbReference type="RefSeq" id="NP_666632.1">
    <property type="nucleotide sequence ID" value="NC_004087.1"/>
</dbReference>
<dbReference type="KEGG" id="vg:951358"/>
<dbReference type="KEGG" id="vg:951389"/>
<dbReference type="OrthoDB" id="41049at10239"/>
<dbReference type="Proteomes" id="UP000002270">
    <property type="component" value="Genome"/>
</dbReference>
<dbReference type="Proteomes" id="UP000223181">
    <property type="component" value="Segment"/>
</dbReference>
<proteinExistence type="predicted"/>
<feature type="chain" id="PRO_0000342292" description="Uncharacterized protein 90">
    <location>
        <begin position="1"/>
        <end position="90"/>
    </location>
</feature>
<gene>
    <name type="ORF">90a</name>
</gene>
<gene>
    <name type="ORF">90c</name>
</gene>
<organism>
    <name type="scientific">Sulfolobus islandicus rod-shaped virus 1</name>
    <name type="common">SIRV-1</name>
    <name type="synonym">Sulfolobus virus SIRV-1</name>
    <dbReference type="NCBI Taxonomy" id="157898"/>
    <lineage>
        <taxon>Viruses</taxon>
        <taxon>Adnaviria</taxon>
        <taxon>Zilligvirae</taxon>
        <taxon>Taleaviricota</taxon>
        <taxon>Tokiviricetes</taxon>
        <taxon>Ligamenvirales</taxon>
        <taxon>Rudiviridae</taxon>
        <taxon>Icerudivirus</taxon>
        <taxon>Icerudivirus SIRV1</taxon>
    </lineage>
</organism>